<feature type="signal peptide" evidence="2">
    <location>
        <begin position="1"/>
        <end position="27"/>
    </location>
</feature>
<feature type="chain" id="PRO_0000025543" description="Putative peptidyl-prolyl cis-trans isomerase SurA">
    <location>
        <begin position="28"/>
        <end position="313"/>
    </location>
</feature>
<feature type="domain" description="PpiC" evidence="3">
    <location>
        <begin position="167"/>
        <end position="267"/>
    </location>
</feature>
<evidence type="ECO:0000250" key="1"/>
<evidence type="ECO:0000255" key="2"/>
<evidence type="ECO:0000255" key="3">
    <source>
        <dbReference type="PROSITE-ProRule" id="PRU00278"/>
    </source>
</evidence>
<evidence type="ECO:0000305" key="4"/>
<reference key="1">
    <citation type="journal article" date="1995" name="Science">
        <title>Whole-genome random sequencing and assembly of Haemophilus influenzae Rd.</title>
        <authorList>
            <person name="Fleischmann R.D."/>
            <person name="Adams M.D."/>
            <person name="White O."/>
            <person name="Clayton R.A."/>
            <person name="Kirkness E.F."/>
            <person name="Kerlavage A.R."/>
            <person name="Bult C.J."/>
            <person name="Tomb J.-F."/>
            <person name="Dougherty B.A."/>
            <person name="Merrick J.M."/>
            <person name="McKenney K."/>
            <person name="Sutton G.G."/>
            <person name="FitzHugh W."/>
            <person name="Fields C.A."/>
            <person name="Gocayne J.D."/>
            <person name="Scott J.D."/>
            <person name="Shirley R."/>
            <person name="Liu L.-I."/>
            <person name="Glodek A."/>
            <person name="Kelley J.M."/>
            <person name="Weidman J.F."/>
            <person name="Phillips C.A."/>
            <person name="Spriggs T."/>
            <person name="Hedblom E."/>
            <person name="Cotton M.D."/>
            <person name="Utterback T.R."/>
            <person name="Hanna M.C."/>
            <person name="Nguyen D.T."/>
            <person name="Saudek D.M."/>
            <person name="Brandon R.C."/>
            <person name="Fine L.D."/>
            <person name="Fritchman J.L."/>
            <person name="Fuhrmann J.L."/>
            <person name="Geoghagen N.S.M."/>
            <person name="Gnehm C.L."/>
            <person name="McDonald L.A."/>
            <person name="Small K.V."/>
            <person name="Fraser C.M."/>
            <person name="Smith H.O."/>
            <person name="Venter J.C."/>
        </authorList>
    </citation>
    <scope>NUCLEOTIDE SEQUENCE [LARGE SCALE GENOMIC DNA]</scope>
    <source>
        <strain>ATCC 51907 / DSM 11121 / KW20 / Rd</strain>
    </source>
</reference>
<name>SURA_HAEIN</name>
<protein>
    <recommendedName>
        <fullName>Putative peptidyl-prolyl cis-trans isomerase SurA</fullName>
        <shortName>PPIase SurA</shortName>
        <ecNumber>5.2.1.8</ecNumber>
    </recommendedName>
    <alternativeName>
        <fullName>Chaperone SurA homolog</fullName>
    </alternativeName>
    <alternativeName>
        <fullName>Rotamase SurA</fullName>
    </alternativeName>
</protein>
<sequence>MKMKKFVLRSFLLATLGCVAFTSMAQAEERVVATVDGIPVLESQVRANMGKKGDRQSAIDKIIDDILVQKAVQESGVKIDPREIDHIVEDTAARNGLTYGQFLDALDYQGISLNTFRQQIANQMVMGAVRNKAIQESIDVTREEVVALGQKMLDEAKSQGTAQKVTGKEYEVRHILLKLNPLLNDAQAKKQLAKIRSDIIAGKTTFADAALKYSKDYLSGANGGSLGYAFPETYAPQFAQTVVKSKQGVISAPFKTEFGWHILEVTGVRDGDLTAEAYTQKAYERLVNTQLQDATNDWVKALRKRANIQYFNK</sequence>
<comment type="function">
    <text evidence="1">Chaperone involved in the folding of extracytoplasmic proteins.</text>
</comment>
<comment type="catalytic activity">
    <reaction>
        <text>[protein]-peptidylproline (omega=180) = [protein]-peptidylproline (omega=0)</text>
        <dbReference type="Rhea" id="RHEA:16237"/>
        <dbReference type="Rhea" id="RHEA-COMP:10747"/>
        <dbReference type="Rhea" id="RHEA-COMP:10748"/>
        <dbReference type="ChEBI" id="CHEBI:83833"/>
        <dbReference type="ChEBI" id="CHEBI:83834"/>
        <dbReference type="EC" id="5.2.1.8"/>
    </reaction>
</comment>
<comment type="subcellular location">
    <subcellularLocation>
        <location evidence="4">Periplasm</location>
    </subcellularLocation>
</comment>
<gene>
    <name type="primary">surA</name>
    <name type="ordered locus">HI_0458</name>
</gene>
<dbReference type="EC" id="5.2.1.8"/>
<dbReference type="EMBL" id="L42023">
    <property type="protein sequence ID" value="AAC22116.1"/>
    <property type="molecule type" value="Genomic_DNA"/>
</dbReference>
<dbReference type="PIR" id="F64069">
    <property type="entry name" value="F64069"/>
</dbReference>
<dbReference type="RefSeq" id="NP_438619.1">
    <property type="nucleotide sequence ID" value="NC_000907.1"/>
</dbReference>
<dbReference type="SMR" id="P44721"/>
<dbReference type="STRING" id="71421.HI_0458"/>
<dbReference type="EnsemblBacteria" id="AAC22116">
    <property type="protein sequence ID" value="AAC22116"/>
    <property type="gene ID" value="HI_0458"/>
</dbReference>
<dbReference type="KEGG" id="hin:HI_0458"/>
<dbReference type="PATRIC" id="fig|71421.8.peg.478"/>
<dbReference type="eggNOG" id="COG0760">
    <property type="taxonomic scope" value="Bacteria"/>
</dbReference>
<dbReference type="HOGENOM" id="CLU_034646_11_0_6"/>
<dbReference type="OrthoDB" id="14196at2"/>
<dbReference type="PhylomeDB" id="P44721"/>
<dbReference type="BioCyc" id="HINF71421:G1GJ1-474-MONOMER"/>
<dbReference type="Proteomes" id="UP000000579">
    <property type="component" value="Chromosome"/>
</dbReference>
<dbReference type="GO" id="GO:0030288">
    <property type="term" value="C:outer membrane-bounded periplasmic space"/>
    <property type="evidence" value="ECO:0000318"/>
    <property type="project" value="GO_Central"/>
</dbReference>
<dbReference type="GO" id="GO:0003755">
    <property type="term" value="F:peptidyl-prolyl cis-trans isomerase activity"/>
    <property type="evidence" value="ECO:0000318"/>
    <property type="project" value="GO_Central"/>
</dbReference>
<dbReference type="GO" id="GO:0051082">
    <property type="term" value="F:unfolded protein binding"/>
    <property type="evidence" value="ECO:0000318"/>
    <property type="project" value="GO_Central"/>
</dbReference>
<dbReference type="GO" id="GO:0061077">
    <property type="term" value="P:chaperone-mediated protein folding"/>
    <property type="evidence" value="ECO:0000318"/>
    <property type="project" value="GO_Central"/>
</dbReference>
<dbReference type="Gene3D" id="3.10.50.40">
    <property type="match status" value="1"/>
</dbReference>
<dbReference type="Gene3D" id="1.10.4030.10">
    <property type="entry name" value="Porin chaperone SurA, peptide-binding domain"/>
    <property type="match status" value="1"/>
</dbReference>
<dbReference type="InterPro" id="IPR050280">
    <property type="entry name" value="OMP_Chaperone_SurA"/>
</dbReference>
<dbReference type="InterPro" id="IPR046357">
    <property type="entry name" value="PPIase_dom_sf"/>
</dbReference>
<dbReference type="InterPro" id="IPR000297">
    <property type="entry name" value="PPIase_PpiC"/>
</dbReference>
<dbReference type="InterPro" id="IPR023058">
    <property type="entry name" value="PPIase_PpiC_CS"/>
</dbReference>
<dbReference type="InterPro" id="IPR015391">
    <property type="entry name" value="SurA_N"/>
</dbReference>
<dbReference type="InterPro" id="IPR027304">
    <property type="entry name" value="Trigger_fact/SurA_dom_sf"/>
</dbReference>
<dbReference type="PANTHER" id="PTHR47637">
    <property type="entry name" value="CHAPERONE SURA"/>
    <property type="match status" value="1"/>
</dbReference>
<dbReference type="PANTHER" id="PTHR47637:SF1">
    <property type="entry name" value="CHAPERONE SURA"/>
    <property type="match status" value="1"/>
</dbReference>
<dbReference type="Pfam" id="PF00639">
    <property type="entry name" value="Rotamase"/>
    <property type="match status" value="1"/>
</dbReference>
<dbReference type="Pfam" id="PF09312">
    <property type="entry name" value="SurA_N"/>
    <property type="match status" value="1"/>
</dbReference>
<dbReference type="SUPFAM" id="SSF54534">
    <property type="entry name" value="FKBP-like"/>
    <property type="match status" value="1"/>
</dbReference>
<dbReference type="SUPFAM" id="SSF109998">
    <property type="entry name" value="Triger factor/SurA peptide-binding domain-like"/>
    <property type="match status" value="1"/>
</dbReference>
<dbReference type="PROSITE" id="PS01096">
    <property type="entry name" value="PPIC_PPIASE_1"/>
    <property type="match status" value="1"/>
</dbReference>
<dbReference type="PROSITE" id="PS50198">
    <property type="entry name" value="PPIC_PPIASE_2"/>
    <property type="match status" value="1"/>
</dbReference>
<organism>
    <name type="scientific">Haemophilus influenzae (strain ATCC 51907 / DSM 11121 / KW20 / Rd)</name>
    <dbReference type="NCBI Taxonomy" id="71421"/>
    <lineage>
        <taxon>Bacteria</taxon>
        <taxon>Pseudomonadati</taxon>
        <taxon>Pseudomonadota</taxon>
        <taxon>Gammaproteobacteria</taxon>
        <taxon>Pasteurellales</taxon>
        <taxon>Pasteurellaceae</taxon>
        <taxon>Haemophilus</taxon>
    </lineage>
</organism>
<proteinExistence type="inferred from homology"/>
<accession>P44721</accession>
<keyword id="KW-0143">Chaperone</keyword>
<keyword id="KW-0413">Isomerase</keyword>
<keyword id="KW-0574">Periplasm</keyword>
<keyword id="KW-1185">Reference proteome</keyword>
<keyword id="KW-0697">Rotamase</keyword>
<keyword id="KW-0732">Signal</keyword>